<protein>
    <recommendedName>
        <fullName>DNA-directed RNA polymerase 22 kDa subunit</fullName>
        <ecNumber>2.7.7.6</ecNumber>
    </recommendedName>
</protein>
<reference key="1">
    <citation type="journal article" date="2013" name="Am. J. Trop. Med. Hyg.">
        <title>Detection of human monkeypox in the republic of the congo following intensive community education.</title>
        <authorList>
            <person name="Reynolds M.G."/>
            <person name="Emerson G.L."/>
            <person name="Pukuta E."/>
            <person name="Karhemere S."/>
            <person name="Muyembe J.J."/>
            <person name="Bikindou A."/>
            <person name="McCollum A.M."/>
            <person name="Moses C."/>
            <person name="Wilkins K."/>
            <person name="Zhao H."/>
            <person name="Damon I.K."/>
            <person name="Karem K.L."/>
            <person name="Li Y."/>
            <person name="Carroll D.S."/>
            <person name="Mombouli J.V."/>
        </authorList>
    </citation>
    <scope>NUCLEOTIDE SEQUENCE [GENOMIC DNA]</scope>
    <source>
        <strain>ROC2010</strain>
    </source>
</reference>
<reference key="2">
    <citation type="journal article" date="2022" name="J. Infect. Dis.">
        <title>Exportation of Monkeypox virus from the African continent.</title>
        <authorList>
            <person name="Mauldin M.R."/>
            <person name="McCollum A.M."/>
            <person name="Nakazawa Y.J."/>
            <person name="Mandra A."/>
            <person name="Whitehouse E.R."/>
            <person name="Davidson W."/>
            <person name="Zhao H."/>
            <person name="Gao J."/>
            <person name="Li Y."/>
            <person name="Doty J."/>
            <person name="Yinka-Ogunleye A."/>
            <person name="Akinpelu A."/>
            <person name="Aruna O."/>
            <person name="Naidoo D."/>
            <person name="Lewandowski K."/>
            <person name="Afrough B."/>
            <person name="Graham V."/>
            <person name="Aarons E."/>
            <person name="Hewson R."/>
            <person name="Vipond R."/>
            <person name="Dunning J."/>
            <person name="Chand M."/>
            <person name="Brown C."/>
            <person name="Cohen-Gihon I."/>
            <person name="Erez N."/>
            <person name="Shifman O."/>
            <person name="Israeli O."/>
            <person name="Sharon M."/>
            <person name="Schwartz E."/>
            <person name="Beth-Din A."/>
            <person name="Zvi A."/>
            <person name="Mak T.M."/>
            <person name="Ng Y.K."/>
            <person name="Cui L."/>
            <person name="Lin R.T.P."/>
            <person name="Olson V.A."/>
            <person name="Brooks T."/>
            <person name="Paran N."/>
            <person name="Ihekweazu C."/>
            <person name="Reynolds M.G."/>
        </authorList>
    </citation>
    <scope>NUCLEOTIDE SEQUENCE [LARGE SCALE GENOMIC DNA]</scope>
    <source>
        <strain>MPXV-M5312_HM12_Rivers</strain>
    </source>
</reference>
<sequence length="185" mass="21342">MNQYNVKYLAKILCLKTEIARDPYAVINRNVLLRYTTDIEYNDLVTLITVRHKIDSMKTVFQVFNESSINYTPVDDDYGEPIIITSYLQKGHNKFPVNFLYIDVVISDLFPSFVRLDTTETNIVNSVLQTGDGKKTLRLPKMLETEIVVKILYRPNIPLKIVRFFRNNMVTGVEIADRSVISVAD</sequence>
<feature type="chain" id="PRO_0000457393" description="DNA-directed RNA polymerase 22 kDa subunit">
    <location>
        <begin position="1"/>
        <end position="185"/>
    </location>
</feature>
<dbReference type="EC" id="2.7.7.6"/>
<dbReference type="EMBL" id="KC257461">
    <property type="protein sequence ID" value="AGF36992.1"/>
    <property type="molecule type" value="Genomic_DNA"/>
</dbReference>
<dbReference type="EMBL" id="MT903340">
    <property type="protein sequence ID" value="QNP12958.1"/>
    <property type="molecule type" value="Genomic_DNA"/>
</dbReference>
<dbReference type="RefSeq" id="NP_536515.1">
    <property type="nucleotide sequence ID" value="NC_003310.1"/>
</dbReference>
<dbReference type="RefSeq" id="YP_010377085.1">
    <property type="nucleotide sequence ID" value="NC_063383.1"/>
</dbReference>
<dbReference type="SMR" id="M1L514"/>
<dbReference type="GeneID" id="72551498"/>
<dbReference type="GeneID" id="929064"/>
<dbReference type="KEGG" id="vg:929064"/>
<dbReference type="Proteomes" id="UP000516359">
    <property type="component" value="Genome"/>
</dbReference>
<dbReference type="GO" id="GO:0000428">
    <property type="term" value="C:DNA-directed RNA polymerase complex"/>
    <property type="evidence" value="ECO:0007669"/>
    <property type="project" value="UniProtKB-KW"/>
</dbReference>
<dbReference type="GO" id="GO:0044423">
    <property type="term" value="C:virion component"/>
    <property type="evidence" value="ECO:0007669"/>
    <property type="project" value="UniProtKB-KW"/>
</dbReference>
<dbReference type="GO" id="GO:0003677">
    <property type="term" value="F:DNA binding"/>
    <property type="evidence" value="ECO:0007669"/>
    <property type="project" value="InterPro"/>
</dbReference>
<dbReference type="GO" id="GO:0003899">
    <property type="term" value="F:DNA-directed RNA polymerase activity"/>
    <property type="evidence" value="ECO:0007669"/>
    <property type="project" value="InterPro"/>
</dbReference>
<dbReference type="GO" id="GO:0019083">
    <property type="term" value="P:viral transcription"/>
    <property type="evidence" value="ECO:0007669"/>
    <property type="project" value="InterPro"/>
</dbReference>
<dbReference type="InterPro" id="IPR007937">
    <property type="entry name" value="RNA_Pol_22kDa_poxvir"/>
</dbReference>
<dbReference type="Pfam" id="PF05273">
    <property type="entry name" value="Pox_RNA_Pol_22"/>
    <property type="match status" value="1"/>
</dbReference>
<dbReference type="PIRSF" id="PIRSF000744">
    <property type="entry name" value="RPO22"/>
    <property type="match status" value="1"/>
</dbReference>
<accession>M1L514</accession>
<organismHost>
    <name type="scientific">Cynomys gunnisoni</name>
    <name type="common">Gunnison's prairie dog</name>
    <name type="synonym">Spermophilus gunnisoni</name>
    <dbReference type="NCBI Taxonomy" id="45479"/>
</organismHost>
<organismHost>
    <name type="scientific">Cynomys leucurus</name>
    <name type="common">White-tailed prairie dog</name>
    <dbReference type="NCBI Taxonomy" id="99825"/>
</organismHost>
<organismHost>
    <name type="scientific">Cynomys ludovicianus</name>
    <name type="common">Black-tailed prairie dog</name>
    <dbReference type="NCBI Taxonomy" id="45480"/>
</organismHost>
<organismHost>
    <name type="scientific">Cynomys mexicanus</name>
    <name type="common">Mexican prairie dog</name>
    <dbReference type="NCBI Taxonomy" id="99826"/>
</organismHost>
<organismHost>
    <name type="scientific">Cynomys parvidens</name>
    <name type="common">Utah prairie dog</name>
    <dbReference type="NCBI Taxonomy" id="99827"/>
</organismHost>
<organismHost>
    <name type="scientific">Gliridae</name>
    <name type="common">dormice</name>
    <dbReference type="NCBI Taxonomy" id="30650"/>
</organismHost>
<organismHost>
    <name type="scientific">Heliosciurus ruwenzorii</name>
    <name type="common">Ruwenzori sun squirrel</name>
    <dbReference type="NCBI Taxonomy" id="226685"/>
</organismHost>
<organismHost>
    <name type="scientific">Homo sapiens</name>
    <name type="common">Human</name>
    <dbReference type="NCBI Taxonomy" id="9606"/>
</organismHost>
<organismHost>
    <name type="scientific">Mus musculus</name>
    <name type="common">Mouse</name>
    <dbReference type="NCBI Taxonomy" id="10090"/>
</organismHost>
<comment type="function">
    <text evidence="1">Part of the DNA-dependent RNA polymerase which catalyzes the transcription of viral DNA into RNA using the four ribonucleoside triphosphates as substrates. Responsible for the transcription of early, intermediate and late genes. DNA-dependent RNA polymerase associates with the early transcription factor (ETF), itself composed of OPG118 and OPG133, thereby allowing the early genes transcription. Late transcription, and probably also intermediate transcription, require newly synthesized RNA polymerase.</text>
</comment>
<comment type="catalytic activity">
    <reaction evidence="1">
        <text>RNA(n) + a ribonucleoside 5'-triphosphate = RNA(n+1) + diphosphate</text>
        <dbReference type="Rhea" id="RHEA:21248"/>
        <dbReference type="Rhea" id="RHEA-COMP:14527"/>
        <dbReference type="Rhea" id="RHEA-COMP:17342"/>
        <dbReference type="ChEBI" id="CHEBI:33019"/>
        <dbReference type="ChEBI" id="CHEBI:61557"/>
        <dbReference type="ChEBI" id="CHEBI:140395"/>
        <dbReference type="EC" id="2.7.7.6"/>
    </reaction>
</comment>
<comment type="subunit">
    <text evidence="1">The DNA-dependent RNA polymerase used for intermediate and late genes expression consists of eight subunits Rpo30/OPG66, Rpo7/OPG90, Rpo22/OPG103, Rpo147/OPG105, Rpo18/OPG119, Rpo19/OPG131, Rpo132/OPG151 and Rpo35/OPG156. The same holoenzyme, with the addition of the transcription-specificity factor OPG109, is used for early gene expression.</text>
</comment>
<comment type="subcellular location">
    <subcellularLocation>
        <location evidence="1">Virion</location>
    </subcellularLocation>
    <text evidence="1">All the enzymes and other proteins required to synthesize early mRNAs are packaged within the virion core along with the DNA genome. This is necessary because viral early mRNAs are synthesized within minutes after virus entry into the cell and are extruded through pores in the core particle.</text>
</comment>
<comment type="similarity">
    <text evidence="2">Belongs to the poxviridae DNA-directed RNA polymerase 22 kDa subunit family.</text>
</comment>
<name>RP22_MONPV</name>
<proteinExistence type="inferred from homology"/>
<keyword id="KW-0240">DNA-directed RNA polymerase</keyword>
<keyword id="KW-0548">Nucleotidyltransferase</keyword>
<keyword id="KW-1185">Reference proteome</keyword>
<keyword id="KW-0804">Transcription</keyword>
<keyword id="KW-0808">Transferase</keyword>
<keyword id="KW-0946">Virion</keyword>
<gene>
    <name type="primary">OPG103</name>
    <name type="synonym">RPO22</name>
    <name type="ORF">MPXV086</name>
</gene>
<organism>
    <name type="scientific">Monkeypox virus</name>
    <dbReference type="NCBI Taxonomy" id="10244"/>
    <lineage>
        <taxon>Viruses</taxon>
        <taxon>Varidnaviria</taxon>
        <taxon>Bamfordvirae</taxon>
        <taxon>Nucleocytoviricota</taxon>
        <taxon>Pokkesviricetes</taxon>
        <taxon>Chitovirales</taxon>
        <taxon>Poxviridae</taxon>
        <taxon>Chordopoxvirinae</taxon>
        <taxon>Orthopoxvirus</taxon>
    </lineage>
</organism>
<evidence type="ECO:0000250" key="1">
    <source>
        <dbReference type="UniProtKB" id="P68609"/>
    </source>
</evidence>
<evidence type="ECO:0000305" key="2"/>